<sequence length="543" mass="62427">MTPGELRRLYLIIRVFLSYGLDELIPNIRLTLPLRVGRHLFFWLSNRHKDKSLGERLRLALQELGPVWIKFGQMMSTRRDLFPPNIADQLALLQDRVASFDGALARKHIEIAMGGALETWFDDFDSQALASASIAQVHTARLKENGKEVVLKVIRPDILPIIKADVRLMYRLAGWVPKLLPDGRRLRPREVVREYEKTLLDELNLLREAANAIQLRRNFEDSPMLYIPEVYSDYCRESVLVMERIYGIPVSDIAALEDQGTNMKLLAERGVQVFFTQVFRDSFFHADMHPGNIFVSYEHPHDPLYIGIDCGIVGSLNKADKRYLAENFIAFFNRDYRRVAELHVDSGWVPRDTNVEDFEFAIRTVCEPIFEKPLAEISFGHVLLNLFNTARRFNMEVQPQLVLLQKTLLYVEGLGRQLYPQLDLWTTAKPFLESWLRDQVGLPAVIRALKEKAPFWAEKFPELPELVYDSLQQHKLLQQSVEKLTIQIQGQQQRQGQSRYLFGVGATLLVSGTILFLADATEVSTGFIVAGALAWFIGWRRTC</sequence>
<reference key="1">
    <citation type="journal article" date="2006" name="J. Bacteriol.">
        <title>Complete genome sequence of Yersinia pestis strains Antiqua and Nepal516: evidence of gene reduction in an emerging pathogen.</title>
        <authorList>
            <person name="Chain P.S.G."/>
            <person name="Hu P."/>
            <person name="Malfatti S.A."/>
            <person name="Radnedge L."/>
            <person name="Larimer F."/>
            <person name="Vergez L.M."/>
            <person name="Worsham P."/>
            <person name="Chu M.C."/>
            <person name="Andersen G.L."/>
        </authorList>
    </citation>
    <scope>NUCLEOTIDE SEQUENCE [LARGE SCALE GENOMIC DNA]</scope>
    <source>
        <strain>Antiqua</strain>
    </source>
</reference>
<gene>
    <name evidence="1" type="primary">ubiB</name>
    <name type="ordered locus">YPA_0245</name>
</gene>
<proteinExistence type="inferred from homology"/>
<organism>
    <name type="scientific">Yersinia pestis bv. Antiqua (strain Antiqua)</name>
    <dbReference type="NCBI Taxonomy" id="360102"/>
    <lineage>
        <taxon>Bacteria</taxon>
        <taxon>Pseudomonadati</taxon>
        <taxon>Pseudomonadota</taxon>
        <taxon>Gammaproteobacteria</taxon>
        <taxon>Enterobacterales</taxon>
        <taxon>Yersiniaceae</taxon>
        <taxon>Yersinia</taxon>
    </lineage>
</organism>
<protein>
    <recommendedName>
        <fullName evidence="1">Probable protein kinase UbiB</fullName>
        <ecNumber evidence="1">2.7.-.-</ecNumber>
    </recommendedName>
    <alternativeName>
        <fullName evidence="1">Ubiquinone biosynthesis protein UbiB</fullName>
    </alternativeName>
</protein>
<evidence type="ECO:0000255" key="1">
    <source>
        <dbReference type="HAMAP-Rule" id="MF_00414"/>
    </source>
</evidence>
<accession>Q1CBF8</accession>
<comment type="function">
    <text evidence="1">Is probably a protein kinase regulator of UbiI activity which is involved in aerobic coenzyme Q (ubiquinone) biosynthesis.</text>
</comment>
<comment type="pathway">
    <text>Cofactor biosynthesis; ubiquinone biosynthesis [regulation].</text>
</comment>
<comment type="subcellular location">
    <subcellularLocation>
        <location evidence="1">Cell inner membrane</location>
        <topology evidence="1">Single-pass membrane protein</topology>
    </subcellularLocation>
</comment>
<comment type="similarity">
    <text evidence="1">Belongs to the ABC1 family. UbiB subfamily.</text>
</comment>
<feature type="chain" id="PRO_1000050076" description="Probable protein kinase UbiB">
    <location>
        <begin position="1"/>
        <end position="543"/>
    </location>
</feature>
<feature type="transmembrane region" description="Helical" evidence="1">
    <location>
        <begin position="517"/>
        <end position="539"/>
    </location>
</feature>
<feature type="domain" description="Protein kinase" evidence="1">
    <location>
        <begin position="123"/>
        <end position="501"/>
    </location>
</feature>
<feature type="active site" description="Proton acceptor" evidence="1">
    <location>
        <position position="287"/>
    </location>
</feature>
<feature type="binding site" evidence="1">
    <location>
        <begin position="129"/>
        <end position="137"/>
    </location>
    <ligand>
        <name>ATP</name>
        <dbReference type="ChEBI" id="CHEBI:30616"/>
    </ligand>
</feature>
<feature type="binding site" evidence="1">
    <location>
        <position position="152"/>
    </location>
    <ligand>
        <name>ATP</name>
        <dbReference type="ChEBI" id="CHEBI:30616"/>
    </ligand>
</feature>
<name>UBIB_YERPA</name>
<keyword id="KW-0067">ATP-binding</keyword>
<keyword id="KW-0997">Cell inner membrane</keyword>
<keyword id="KW-1003">Cell membrane</keyword>
<keyword id="KW-0418">Kinase</keyword>
<keyword id="KW-0472">Membrane</keyword>
<keyword id="KW-0547">Nucleotide-binding</keyword>
<keyword id="KW-0808">Transferase</keyword>
<keyword id="KW-0812">Transmembrane</keyword>
<keyword id="KW-1133">Transmembrane helix</keyword>
<keyword id="KW-0831">Ubiquinone biosynthesis</keyword>
<dbReference type="EC" id="2.7.-.-" evidence="1"/>
<dbReference type="EMBL" id="CP000308">
    <property type="protein sequence ID" value="ABG12214.1"/>
    <property type="molecule type" value="Genomic_DNA"/>
</dbReference>
<dbReference type="RefSeq" id="WP_002211535.1">
    <property type="nucleotide sequence ID" value="NZ_CP009906.1"/>
</dbReference>
<dbReference type="SMR" id="Q1CBF8"/>
<dbReference type="GeneID" id="57974929"/>
<dbReference type="KEGG" id="ypa:YPA_0245"/>
<dbReference type="UniPathway" id="UPA00232"/>
<dbReference type="Proteomes" id="UP000001971">
    <property type="component" value="Chromosome"/>
</dbReference>
<dbReference type="GO" id="GO:0005886">
    <property type="term" value="C:plasma membrane"/>
    <property type="evidence" value="ECO:0007669"/>
    <property type="project" value="UniProtKB-SubCell"/>
</dbReference>
<dbReference type="GO" id="GO:0005524">
    <property type="term" value="F:ATP binding"/>
    <property type="evidence" value="ECO:0007669"/>
    <property type="project" value="UniProtKB-KW"/>
</dbReference>
<dbReference type="GO" id="GO:0004672">
    <property type="term" value="F:protein kinase activity"/>
    <property type="evidence" value="ECO:0007669"/>
    <property type="project" value="UniProtKB-UniRule"/>
</dbReference>
<dbReference type="GO" id="GO:0010795">
    <property type="term" value="P:regulation of ubiquinone biosynthetic process"/>
    <property type="evidence" value="ECO:0007669"/>
    <property type="project" value="UniProtKB-UniRule"/>
</dbReference>
<dbReference type="GO" id="GO:0006744">
    <property type="term" value="P:ubiquinone biosynthetic process"/>
    <property type="evidence" value="ECO:0007669"/>
    <property type="project" value="UniProtKB-UniPathway"/>
</dbReference>
<dbReference type="CDD" id="cd13972">
    <property type="entry name" value="UbiB"/>
    <property type="match status" value="1"/>
</dbReference>
<dbReference type="HAMAP" id="MF_00414">
    <property type="entry name" value="UbiB"/>
    <property type="match status" value="1"/>
</dbReference>
<dbReference type="InterPro" id="IPR004147">
    <property type="entry name" value="ABC1_dom"/>
</dbReference>
<dbReference type="InterPro" id="IPR011009">
    <property type="entry name" value="Kinase-like_dom_sf"/>
</dbReference>
<dbReference type="InterPro" id="IPR010232">
    <property type="entry name" value="UbiB"/>
</dbReference>
<dbReference type="InterPro" id="IPR045308">
    <property type="entry name" value="UbiB_bact"/>
</dbReference>
<dbReference type="InterPro" id="IPR050154">
    <property type="entry name" value="UbiB_kinase"/>
</dbReference>
<dbReference type="NCBIfam" id="NF003404">
    <property type="entry name" value="PRK04750.1"/>
    <property type="match status" value="1"/>
</dbReference>
<dbReference type="NCBIfam" id="TIGR01982">
    <property type="entry name" value="UbiB"/>
    <property type="match status" value="1"/>
</dbReference>
<dbReference type="PANTHER" id="PTHR10566">
    <property type="entry name" value="CHAPERONE-ACTIVITY OF BC1 COMPLEX CABC1 -RELATED"/>
    <property type="match status" value="1"/>
</dbReference>
<dbReference type="PANTHER" id="PTHR10566:SF113">
    <property type="entry name" value="PROTEIN ACTIVITY OF BC1 COMPLEX KINASE 7, CHLOROPLASTIC"/>
    <property type="match status" value="1"/>
</dbReference>
<dbReference type="Pfam" id="PF03109">
    <property type="entry name" value="ABC1"/>
    <property type="match status" value="1"/>
</dbReference>
<dbReference type="SUPFAM" id="SSF56112">
    <property type="entry name" value="Protein kinase-like (PK-like)"/>
    <property type="match status" value="1"/>
</dbReference>